<name>PPDPF_SALSA</name>
<evidence type="ECO:0000250" key="1"/>
<evidence type="ECO:0000256" key="2">
    <source>
        <dbReference type="SAM" id="MobiDB-lite"/>
    </source>
</evidence>
<evidence type="ECO:0000305" key="3"/>
<gene>
    <name type="primary">ppdpf</name>
    <name type="synonym">exdpf</name>
</gene>
<accession>B5DGK1</accession>
<protein>
    <recommendedName>
        <fullName>Pancreatic progenitor cell differentiation and proliferation factor</fullName>
    </recommendedName>
    <alternativeName>
        <fullName>Exocrine differentiation and proliferation factor</fullName>
    </alternativeName>
</protein>
<dbReference type="EMBL" id="BT043760">
    <property type="protein sequence ID" value="ACH70875.1"/>
    <property type="molecule type" value="mRNA"/>
</dbReference>
<dbReference type="RefSeq" id="NP_001133171.1">
    <property type="nucleotide sequence ID" value="NM_001139699.1"/>
</dbReference>
<dbReference type="PaxDb" id="8030-ENSSSAP00000058703"/>
<dbReference type="Ensembl" id="ENSSSAT00020014601">
    <property type="protein sequence ID" value="ENSSSAP00020013605"/>
    <property type="gene ID" value="ENSSSAG00020005311"/>
</dbReference>
<dbReference type="Ensembl" id="ENSSSAT00070060202">
    <property type="protein sequence ID" value="ENSSSAP00070057686"/>
    <property type="gene ID" value="ENSSSAG00070037533"/>
</dbReference>
<dbReference type="Ensembl" id="ENSSSAT00075088347">
    <property type="protein sequence ID" value="ENSSSAP00075064235"/>
    <property type="gene ID" value="ENSSSAG00075042148"/>
</dbReference>
<dbReference type="GeneID" id="100194614"/>
<dbReference type="KEGG" id="sasa:100194614"/>
<dbReference type="CTD" id="79144"/>
<dbReference type="OMA" id="ITCIAQE"/>
<dbReference type="OrthoDB" id="476230at7898"/>
<dbReference type="Proteomes" id="UP000087266">
    <property type="component" value="Chromosome ssa13"/>
</dbReference>
<dbReference type="Bgee" id="ENSSSAG00000055142">
    <property type="expression patterns" value="Expressed in muscle tissue and 24 other cell types or tissues"/>
</dbReference>
<dbReference type="GO" id="GO:0030154">
    <property type="term" value="P:cell differentiation"/>
    <property type="evidence" value="ECO:0007669"/>
    <property type="project" value="UniProtKB-KW"/>
</dbReference>
<dbReference type="InterPro" id="IPR026754">
    <property type="entry name" value="PPDPF"/>
</dbReference>
<dbReference type="PANTHER" id="PTHR14572">
    <property type="entry name" value="PANCREATIC PROGENITOR CELL DIFFERENTIATION AND PROLIFERATION FACTOR"/>
    <property type="match status" value="1"/>
</dbReference>
<dbReference type="Pfam" id="PF15060">
    <property type="entry name" value="PPDFL"/>
    <property type="match status" value="1"/>
</dbReference>
<dbReference type="PRINTS" id="PR02071">
    <property type="entry name" value="PPDPFACTOR"/>
</dbReference>
<organism>
    <name type="scientific">Salmo salar</name>
    <name type="common">Atlantic salmon</name>
    <dbReference type="NCBI Taxonomy" id="8030"/>
    <lineage>
        <taxon>Eukaryota</taxon>
        <taxon>Metazoa</taxon>
        <taxon>Chordata</taxon>
        <taxon>Craniata</taxon>
        <taxon>Vertebrata</taxon>
        <taxon>Euteleostomi</taxon>
        <taxon>Actinopterygii</taxon>
        <taxon>Neopterygii</taxon>
        <taxon>Teleostei</taxon>
        <taxon>Protacanthopterygii</taxon>
        <taxon>Salmoniformes</taxon>
        <taxon>Salmonidae</taxon>
        <taxon>Salmoninae</taxon>
        <taxon>Salmo</taxon>
    </lineage>
</organism>
<proteinExistence type="evidence at transcript level"/>
<reference key="1">
    <citation type="journal article" date="2010" name="BMC Genomics">
        <title>Salmo salar and Esox lucius full-length cDNA sequences reveal changes in evolutionary pressures on a post-tetraploidization genome.</title>
        <authorList>
            <person name="Leong J.S."/>
            <person name="Jantzen S.G."/>
            <person name="von Schalburg K.R."/>
            <person name="Cooper G.A."/>
            <person name="Messmer A.M."/>
            <person name="Liao N.Y."/>
            <person name="Munro S."/>
            <person name="Moore R."/>
            <person name="Holt R.A."/>
            <person name="Jones S.J."/>
            <person name="Davidson W.S."/>
            <person name="Koop B.F."/>
        </authorList>
    </citation>
    <scope>NUCLEOTIDE SEQUENCE [LARGE SCALE MRNA]</scope>
    <source>
        <tissue>White muscle</tissue>
    </source>
</reference>
<sequence>MASIPSTGSLIATHDYYRRRIGSTSSNSSCGSSEYAGEVIPHPPGLQRQDSGHWWSSFFFPNKQNQPGGMIGSEQKSGTYTVTNGQVACIAREMVLKKQLSRQLSESSDSGKVEQGSPPPS</sequence>
<feature type="chain" id="PRO_0000365945" description="Pancreatic progenitor cell differentiation and proliferation factor">
    <location>
        <begin position="1"/>
        <end position="121"/>
    </location>
</feature>
<feature type="region of interest" description="Disordered" evidence="2">
    <location>
        <begin position="22"/>
        <end position="47"/>
    </location>
</feature>
<feature type="region of interest" description="Disordered" evidence="2">
    <location>
        <begin position="101"/>
        <end position="121"/>
    </location>
</feature>
<feature type="compositionally biased region" description="Low complexity" evidence="2">
    <location>
        <begin position="23"/>
        <end position="33"/>
    </location>
</feature>
<feature type="compositionally biased region" description="Polar residues" evidence="2">
    <location>
        <begin position="101"/>
        <end position="110"/>
    </location>
</feature>
<keyword id="KW-0217">Developmental protein</keyword>
<keyword id="KW-0221">Differentiation</keyword>
<keyword id="KW-1185">Reference proteome</keyword>
<comment type="function">
    <text evidence="1">Probable regulator of exocrine pancreas development.</text>
</comment>
<comment type="similarity">
    <text evidence="3">Belongs to the PPDPF family.</text>
</comment>